<protein>
    <recommendedName>
        <fullName>Histone H2A type 1-H</fullName>
    </recommendedName>
    <alternativeName>
        <fullName evidence="27">H2A-clustered histone 12</fullName>
    </alternativeName>
    <alternativeName>
        <fullName>Histone H2A/s</fullName>
    </alternativeName>
</protein>
<keyword id="KW-0002">3D-structure</keyword>
<keyword id="KW-0007">Acetylation</keyword>
<keyword id="KW-0158">Chromosome</keyword>
<keyword id="KW-0164">Citrullination</keyword>
<keyword id="KW-0238">DNA-binding</keyword>
<keyword id="KW-0379">Hydroxylation</keyword>
<keyword id="KW-1017">Isopeptide bond</keyword>
<keyword id="KW-0488">Methylation</keyword>
<keyword id="KW-0544">Nucleosome core</keyword>
<keyword id="KW-0539">Nucleus</keyword>
<keyword id="KW-0597">Phosphoprotein</keyword>
<keyword id="KW-1185">Reference proteome</keyword>
<keyword id="KW-0832">Ubl conjugation</keyword>
<accession>Q96KK5</accession>
<organism>
    <name type="scientific">Homo sapiens</name>
    <name type="common">Human</name>
    <dbReference type="NCBI Taxonomy" id="9606"/>
    <lineage>
        <taxon>Eukaryota</taxon>
        <taxon>Metazoa</taxon>
        <taxon>Chordata</taxon>
        <taxon>Craniata</taxon>
        <taxon>Vertebrata</taxon>
        <taxon>Euteleostomi</taxon>
        <taxon>Mammalia</taxon>
        <taxon>Eutheria</taxon>
        <taxon>Euarchontoglires</taxon>
        <taxon>Primates</taxon>
        <taxon>Haplorrhini</taxon>
        <taxon>Catarrhini</taxon>
        <taxon>Hominidae</taxon>
        <taxon>Homo</taxon>
    </lineage>
</organism>
<gene>
    <name evidence="27" type="primary">H2AC12</name>
    <name evidence="27" type="synonym">HIST1H2AH</name>
    <name type="synonym">HIST1H2AI</name>
</gene>
<comment type="function">
    <text>Core component of nucleosome. Nucleosomes wrap and compact DNA into chromatin, limiting DNA accessibility to the cellular machineries which require DNA as a template. Histones thereby play a central role in transcription regulation, DNA repair, DNA replication and chromosomal stability. DNA accessibility is regulated via a complex set of post-translational modifications of histones, also called histone code, and nucleosome remodeling.</text>
</comment>
<comment type="subunit">
    <text>The nucleosome is a histone octamer containing two molecules each of H2A, H2B, H3 and H4 assembled in one H3-H4 heterotetramer and two H2A-H2B heterodimers. The octamer wraps approximately 147 bp of DNA.</text>
</comment>
<comment type="subcellular location">
    <subcellularLocation>
        <location>Nucleus</location>
    </subcellularLocation>
    <subcellularLocation>
        <location>Chromosome</location>
    </subcellularLocation>
</comment>
<comment type="PTM">
    <text evidence="8">Deiminated on Arg-4 in granulocytes upon calcium entry.</text>
</comment>
<comment type="PTM">
    <text evidence="7 9 10 11 12 13 14 17 18 20 22 23">Monoubiquitination of Lys-120 (H2AK119Ub) by RING1, TRIM37 and RNF2/RING2 complex gives a specific tag for epigenetic transcriptional repression and participates in X chromosome inactivation of female mammals. It is involved in the initiation of both imprinted and random X inactivation. Ubiquitinated H2A is enriched in inactive X chromosome chromatin. Ubiquitination of H2A functions downstream of methylation of 'Lys-27' of histone H3 (H3K27me). H2AK119Ub by RNF2/RING2 can also be induced by ultraviolet and may be involved in DNA repair. Monoubiquitination of Lys-120 (H2AK119Ub) by TRIM37 may promote transformation of cells in a number of breast cancers (PubMed:25470042). Following DNA double-strand breaks (DSBs), it is ubiquitinated through 'Lys-63' linkage of ubiquitin moieties by the E2 ligase UBE2N and the E3 ligases RNF8 and RNF168, leading to the recruitment of repair proteins to sites of DNA damage. Ubiquitination at Lys-14 and Lys-16 (H2AK13Ub and H2AK15Ub, respectively) in response to DNA damage is initiated by RNF168 that mediates monoubiquitination at these 2 sites, and 'Lys-63'-linked ubiquitin are then conjugated to monoubiquitin; RNF8 is able to extend 'Lys-63'-linked ubiquitin chains in vitro. Deubiquitinated by USP51 at Lys-14 and Lys-16 (H2AK13Ub and H2AK15Ub, respectively) after damaged DNA is repaired (PubMed:27083998). H2AK119Ub and ionizing radiation-induced 'Lys-63'-linked ubiquitination (H2AK13Ub and H2AK15Ub) are distinct events.</text>
</comment>
<comment type="PTM">
    <text evidence="5 6 8 19">Phosphorylation on Ser-2 (H2AS1ph) is enhanced during mitosis. Phosphorylation on Ser-2 by RPS6KA5/MSK1 directly represses transcription. Acetylation of H3 inhibits Ser-2 phosphorylation by RPS6KA5/MSK1. Phosphorylation at Thr-121 (H2AT120ph) by DCAF1 is present in the regulatory region of many tumor suppresor genes and down-regulates their transcription.</text>
</comment>
<comment type="PTM">
    <text evidence="20">Glutamine methylation at Gln-105 (H2AQ104me) by FBL is specifically dedicated to polymerase I. It is present at 35S ribosomal DNA locus and impairs binding of the FACT complex (PubMed:24352239).</text>
</comment>
<comment type="PTM">
    <text evidence="2">Symmetric dimethylation on Arg-4 by the PRDM1/PRMT5 complex may play a crucial role in the germ-cell lineage.</text>
</comment>
<comment type="PTM">
    <text evidence="15">Crotonylation (Kcr) is specifically present in male germ cells and marks testis-specific genes in post-meiotic cells, including X-linked genes that escape sex chromosome inactivation in haploid cells. Crotonylation marks active promoters and enhancers and confers resistance to transcriptional repressors. It is also associated with post-meiotically activated genes on autosomes.</text>
</comment>
<comment type="PTM">
    <text evidence="1">Lactylated in macrophages by EP300/P300 by using lactoyl-CoA directly derived from endogenous or exogenous lactate, leading to stimulates gene transcription.</text>
</comment>
<comment type="similarity">
    <text evidence="26">Belongs to the histone H2A family.</text>
</comment>
<reference key="1">
    <citation type="journal article" date="2002" name="Genomics">
        <title>The human and mouse replication-dependent histone genes.</title>
        <authorList>
            <person name="Marzluff W.F."/>
            <person name="Gongidi P."/>
            <person name="Woods K.R."/>
            <person name="Jin J."/>
            <person name="Maltais L.J."/>
        </authorList>
    </citation>
    <scope>NUCLEOTIDE SEQUENCE [GENOMIC DNA]</scope>
</reference>
<reference key="2">
    <citation type="journal article" date="2003" name="Nature">
        <title>The DNA sequence and analysis of human chromosome 6.</title>
        <authorList>
            <person name="Mungall A.J."/>
            <person name="Palmer S.A."/>
            <person name="Sims S.K."/>
            <person name="Edwards C.A."/>
            <person name="Ashurst J.L."/>
            <person name="Wilming L."/>
            <person name="Jones M.C."/>
            <person name="Horton R."/>
            <person name="Hunt S.E."/>
            <person name="Scott C.E."/>
            <person name="Gilbert J.G.R."/>
            <person name="Clamp M.E."/>
            <person name="Bethel G."/>
            <person name="Milne S."/>
            <person name="Ainscough R."/>
            <person name="Almeida J.P."/>
            <person name="Ambrose K.D."/>
            <person name="Andrews T.D."/>
            <person name="Ashwell R.I.S."/>
            <person name="Babbage A.K."/>
            <person name="Bagguley C.L."/>
            <person name="Bailey J."/>
            <person name="Banerjee R."/>
            <person name="Barker D.J."/>
            <person name="Barlow K.F."/>
            <person name="Bates K."/>
            <person name="Beare D.M."/>
            <person name="Beasley H."/>
            <person name="Beasley O."/>
            <person name="Bird C.P."/>
            <person name="Blakey S.E."/>
            <person name="Bray-Allen S."/>
            <person name="Brook J."/>
            <person name="Brown A.J."/>
            <person name="Brown J.Y."/>
            <person name="Burford D.C."/>
            <person name="Burrill W."/>
            <person name="Burton J."/>
            <person name="Carder C."/>
            <person name="Carter N.P."/>
            <person name="Chapman J.C."/>
            <person name="Clark S.Y."/>
            <person name="Clark G."/>
            <person name="Clee C.M."/>
            <person name="Clegg S."/>
            <person name="Cobley V."/>
            <person name="Collier R.E."/>
            <person name="Collins J.E."/>
            <person name="Colman L.K."/>
            <person name="Corby N.R."/>
            <person name="Coville G.J."/>
            <person name="Culley K.M."/>
            <person name="Dhami P."/>
            <person name="Davies J."/>
            <person name="Dunn M."/>
            <person name="Earthrowl M.E."/>
            <person name="Ellington A.E."/>
            <person name="Evans K.A."/>
            <person name="Faulkner L."/>
            <person name="Francis M.D."/>
            <person name="Frankish A."/>
            <person name="Frankland J."/>
            <person name="French L."/>
            <person name="Garner P."/>
            <person name="Garnett J."/>
            <person name="Ghori M.J."/>
            <person name="Gilby L.M."/>
            <person name="Gillson C.J."/>
            <person name="Glithero R.J."/>
            <person name="Grafham D.V."/>
            <person name="Grant M."/>
            <person name="Gribble S."/>
            <person name="Griffiths C."/>
            <person name="Griffiths M.N.D."/>
            <person name="Hall R."/>
            <person name="Halls K.S."/>
            <person name="Hammond S."/>
            <person name="Harley J.L."/>
            <person name="Hart E.A."/>
            <person name="Heath P.D."/>
            <person name="Heathcott R."/>
            <person name="Holmes S.J."/>
            <person name="Howden P.J."/>
            <person name="Howe K.L."/>
            <person name="Howell G.R."/>
            <person name="Huckle E."/>
            <person name="Humphray S.J."/>
            <person name="Humphries M.D."/>
            <person name="Hunt A.R."/>
            <person name="Johnson C.M."/>
            <person name="Joy A.A."/>
            <person name="Kay M."/>
            <person name="Keenan S.J."/>
            <person name="Kimberley A.M."/>
            <person name="King A."/>
            <person name="Laird G.K."/>
            <person name="Langford C."/>
            <person name="Lawlor S."/>
            <person name="Leongamornlert D.A."/>
            <person name="Leversha M."/>
            <person name="Lloyd C.R."/>
            <person name="Lloyd D.M."/>
            <person name="Loveland J.E."/>
            <person name="Lovell J."/>
            <person name="Martin S."/>
            <person name="Mashreghi-Mohammadi M."/>
            <person name="Maslen G.L."/>
            <person name="Matthews L."/>
            <person name="McCann O.T."/>
            <person name="McLaren S.J."/>
            <person name="McLay K."/>
            <person name="McMurray A."/>
            <person name="Moore M.J.F."/>
            <person name="Mullikin J.C."/>
            <person name="Niblett D."/>
            <person name="Nickerson T."/>
            <person name="Novik K.L."/>
            <person name="Oliver K."/>
            <person name="Overton-Larty E.K."/>
            <person name="Parker A."/>
            <person name="Patel R."/>
            <person name="Pearce A.V."/>
            <person name="Peck A.I."/>
            <person name="Phillimore B.J.C.T."/>
            <person name="Phillips S."/>
            <person name="Plumb R.W."/>
            <person name="Porter K.M."/>
            <person name="Ramsey Y."/>
            <person name="Ranby S.A."/>
            <person name="Rice C.M."/>
            <person name="Ross M.T."/>
            <person name="Searle S.M."/>
            <person name="Sehra H.K."/>
            <person name="Sheridan E."/>
            <person name="Skuce C.D."/>
            <person name="Smith S."/>
            <person name="Smith M."/>
            <person name="Spraggon L."/>
            <person name="Squares S.L."/>
            <person name="Steward C.A."/>
            <person name="Sycamore N."/>
            <person name="Tamlyn-Hall G."/>
            <person name="Tester J."/>
            <person name="Theaker A.J."/>
            <person name="Thomas D.W."/>
            <person name="Thorpe A."/>
            <person name="Tracey A."/>
            <person name="Tromans A."/>
            <person name="Tubby B."/>
            <person name="Wall M."/>
            <person name="Wallis J.M."/>
            <person name="West A.P."/>
            <person name="White S.S."/>
            <person name="Whitehead S.L."/>
            <person name="Whittaker H."/>
            <person name="Wild A."/>
            <person name="Willey D.J."/>
            <person name="Wilmer T.E."/>
            <person name="Wood J.M."/>
            <person name="Wray P.W."/>
            <person name="Wyatt J.C."/>
            <person name="Young L."/>
            <person name="Younger R.M."/>
            <person name="Bentley D.R."/>
            <person name="Coulson A."/>
            <person name="Durbin R.M."/>
            <person name="Hubbard T."/>
            <person name="Sulston J.E."/>
            <person name="Dunham I."/>
            <person name="Rogers J."/>
            <person name="Beck S."/>
        </authorList>
    </citation>
    <scope>NUCLEOTIDE SEQUENCE [LARGE SCALE GENOMIC DNA]</scope>
</reference>
<reference key="3">
    <citation type="journal article" date="2004" name="Genome Res.">
        <title>The status, quality, and expansion of the NIH full-length cDNA project: the Mammalian Gene Collection (MGC).</title>
        <authorList>
            <consortium name="The MGC Project Team"/>
        </authorList>
    </citation>
    <scope>NUCLEOTIDE SEQUENCE [LARGE SCALE MRNA]</scope>
    <source>
        <tissue>Placenta</tissue>
    </source>
</reference>
<reference key="4">
    <citation type="journal article" date="2004" name="Genes Dev.">
        <title>Nucleosomal histone kinase-1 phosphorylates H2A Thr 119 during mitosis in the early Drosophila embryo.</title>
        <authorList>
            <person name="Aihara H."/>
            <person name="Nakagawa T."/>
            <person name="Yasui K."/>
            <person name="Ohta T."/>
            <person name="Hirose S."/>
            <person name="Dhomae N."/>
            <person name="Takio K."/>
            <person name="Kaneko M."/>
            <person name="Takeshima Y."/>
            <person name="Muramatsu M."/>
            <person name="Ito T."/>
        </authorList>
    </citation>
    <scope>PHOSPHORYLATION AT THR-121</scope>
</reference>
<reference key="5">
    <citation type="journal article" date="2004" name="J. Biol. Chem.">
        <title>Phosphorylation of histone H2A inhibits transcription on chromatin templates.</title>
        <authorList>
            <person name="Zhang Y."/>
            <person name="Griffin K."/>
            <person name="Mondal N."/>
            <person name="Parvin J.D."/>
        </authorList>
    </citation>
    <scope>PHOSPHORYLATION AT SER-2</scope>
    <scope>MUTAGENESIS OF SER-2</scope>
</reference>
<reference key="6">
    <citation type="journal article" date="2004" name="Nature">
        <title>Role of histone H2A ubiquitination in Polycomb silencing.</title>
        <authorList>
            <person name="Wang H."/>
            <person name="Wang L."/>
            <person name="Erdjument-Bromage H."/>
            <person name="Vidal M."/>
            <person name="Tempst P."/>
            <person name="Jones R.S."/>
            <person name="Zhang Y."/>
        </authorList>
    </citation>
    <scope>UBIQUITINATION AT LYS-120</scope>
</reference>
<reference key="7">
    <citation type="journal article" date="2005" name="Biochemistry">
        <title>Deimination of histone H2A and H4 at arginine 3 in HL-60 granulocytes.</title>
        <authorList>
            <person name="Hagiwara T."/>
            <person name="Hidaka Y."/>
            <person name="Yamada M."/>
        </authorList>
    </citation>
    <scope>ACETYLATION AT SER-2</scope>
    <scope>CITRULLINATION AT ARG-4</scope>
    <scope>IDENTIFICATION BY MASS SPECTROMETRY</scope>
</reference>
<reference key="8">
    <citation type="journal article" date="2005" name="Mol. Cell">
        <title>Role of Bmi-1 and Ring1A in H2A ubiquitylation and Hox gene silencing.</title>
        <authorList>
            <person name="Cao R."/>
            <person name="Tsukada Y."/>
            <person name="Zhang Y."/>
        </authorList>
    </citation>
    <scope>UBIQUITINATION AT LYS-120</scope>
</reference>
<reference key="9">
    <citation type="journal article" date="2006" name="Genes Dev.">
        <title>DNA damage triggers nucleotide excision repair-dependent monoubiquitylation of histone H2A.</title>
        <authorList>
            <person name="Bergink S."/>
            <person name="Salomons F.A."/>
            <person name="Hoogstraten D."/>
            <person name="Groothuis T.A.M."/>
            <person name="de Waard H."/>
            <person name="Wu J."/>
            <person name="Yuan L."/>
            <person name="Citterio E."/>
            <person name="Houtsmuller A.B."/>
            <person name="Neefjes J."/>
            <person name="Hoeijmakers J.H.J."/>
            <person name="Vermeulen W."/>
            <person name="Dantuma N.P."/>
        </authorList>
    </citation>
    <scope>UBIQUITINATION AT LYS-120</scope>
</reference>
<reference key="10">
    <citation type="journal article" date="2007" name="Cell">
        <title>RNF8 ubiquitylates histones at DNA double-strand breaks and promotes assembly of repair proteins.</title>
        <authorList>
            <person name="Mailand N."/>
            <person name="Bekker-Jensen S."/>
            <person name="Faustrup H."/>
            <person name="Melander F."/>
            <person name="Bartek J."/>
            <person name="Lukas C."/>
            <person name="Lukas J."/>
        </authorList>
    </citation>
    <scope>UBIQUITINATION</scope>
</reference>
<reference key="11">
    <citation type="journal article" date="2007" name="Cell">
        <title>RNF8 transduces the DNA-damage signal via histone ubiquitylation and checkpoint protein assembly.</title>
        <authorList>
            <person name="Huen M.S.Y."/>
            <person name="Grant R."/>
            <person name="Manke I."/>
            <person name="Minn K."/>
            <person name="Yu X."/>
            <person name="Yaffe M.B."/>
            <person name="Chen J."/>
        </authorList>
    </citation>
    <scope>UBIQUITINATION</scope>
</reference>
<reference key="12">
    <citation type="journal article" date="2009" name="Cell">
        <title>The RIDDLE syndrome protein mediates a ubiquitin-dependent signaling cascade at sites of DNA damage.</title>
        <authorList>
            <person name="Stewart G.S."/>
            <person name="Panier S."/>
            <person name="Townsend K."/>
            <person name="Al-Hakim A.K."/>
            <person name="Kolas N.K."/>
            <person name="Miller E.S."/>
            <person name="Nakada S."/>
            <person name="Ylanko J."/>
            <person name="Olivarius S."/>
            <person name="Mendez M."/>
            <person name="Oldreive C."/>
            <person name="Wildenhain J."/>
            <person name="Tagliaferro A."/>
            <person name="Pelletier L."/>
            <person name="Taubenheim N."/>
            <person name="Durandy A."/>
            <person name="Byrd P.J."/>
            <person name="Stankovic T."/>
            <person name="Taylor A.M.R."/>
            <person name="Durocher D."/>
        </authorList>
    </citation>
    <scope>UBIQUITINATION</scope>
</reference>
<reference key="13">
    <citation type="journal article" date="2009" name="Cell">
        <title>RNF168 binds and amplifies ubiquitin conjugates on damaged chromosomes to allow accumulation of repair proteins.</title>
        <authorList>
            <person name="Doil C."/>
            <person name="Mailand N."/>
            <person name="Bekker-Jensen S."/>
            <person name="Menard P."/>
            <person name="Larsen D.H."/>
            <person name="Pepperkok R."/>
            <person name="Ellenberg J."/>
            <person name="Panier S."/>
            <person name="Durocher D."/>
            <person name="Bartek J."/>
            <person name="Lukas J."/>
            <person name="Lukas C."/>
        </authorList>
    </citation>
    <scope>UBIQUITINATION</scope>
</reference>
<reference key="14">
    <citation type="journal article" date="2011" name="Cell">
        <title>Identification of 67 histone marks and histone lysine crotonylation as a new type of histone modification.</title>
        <authorList>
            <person name="Tan M."/>
            <person name="Luo H."/>
            <person name="Lee S."/>
            <person name="Jin F."/>
            <person name="Yang J.S."/>
            <person name="Montellier E."/>
            <person name="Buchou T."/>
            <person name="Cheng Z."/>
            <person name="Rousseaux S."/>
            <person name="Rajagopal N."/>
            <person name="Lu Z."/>
            <person name="Ye Z."/>
            <person name="Zhu Q."/>
            <person name="Wysocka J."/>
            <person name="Ye Y."/>
            <person name="Khochbin S."/>
            <person name="Ren B."/>
            <person name="Zhao Y."/>
        </authorList>
    </citation>
    <scope>CROTONYLATION AT LYS-37; LYS-119; LYS-120 AND LYS-126</scope>
</reference>
<reference key="15">
    <citation type="journal article" date="2012" name="Cell">
        <title>RNF168 ubiquitinates K13-15 on H2A/H2AX to drive DNA Damage signaling.</title>
        <authorList>
            <person name="Mattiroli F."/>
            <person name="Vissers J.H."/>
            <person name="van Dijk W.J."/>
            <person name="Ikpa P."/>
            <person name="Citterio E."/>
            <person name="Vermeulen W."/>
            <person name="Marteijn J.A."/>
            <person name="Sixma T.K."/>
        </authorList>
    </citation>
    <scope>UBIQUITINATION AT LYS-14 AND LYS-16 BY RNF168</scope>
</reference>
<reference key="16">
    <citation type="journal article" date="2012" name="Cell Cycle">
        <title>A novel ubiquitin mark at the N-terminal tail of histone H2As targeted by RNF168 ubiquitin ligase.</title>
        <authorList>
            <person name="Gatti M."/>
            <person name="Pinato S."/>
            <person name="Maspero E."/>
            <person name="Soffientini P."/>
            <person name="Polo S."/>
            <person name="Penengo L."/>
        </authorList>
    </citation>
    <scope>UBIQUITINATION AT LYS-14 AND LYS-16 BY RNF168</scope>
</reference>
<reference key="17">
    <citation type="journal article" date="2012" name="Mol. Cell. Proteomics">
        <title>Lysine succinylation and lysine malonylation in histones.</title>
        <authorList>
            <person name="Xie Z."/>
            <person name="Dai J."/>
            <person name="Dai L."/>
            <person name="Tan M."/>
            <person name="Cheng Z."/>
            <person name="Wu Y."/>
            <person name="Boeke J.D."/>
            <person name="Zhao Y."/>
        </authorList>
    </citation>
    <scope>SUCCINYLATION AT LYS-10 AND LYS-96</scope>
</reference>
<reference key="18">
    <citation type="journal article" date="2013" name="Mol. Cell">
        <title>VprBP has intrinsic kinase activity targeting histone H2A and represses gene transcription.</title>
        <authorList>
            <person name="Kim K."/>
            <person name="Kim J.M."/>
            <person name="Kim J.S."/>
            <person name="Choi J."/>
            <person name="Lee Y.S."/>
            <person name="Neamati N."/>
            <person name="Song J.S."/>
            <person name="Heo K."/>
            <person name="An W."/>
        </authorList>
    </citation>
    <scope>PHOSPHORYLATION AT THR-121</scope>
</reference>
<reference key="19">
    <citation type="journal article" date="2014" name="Nat. Chem. Biol.">
        <title>Lysine 2-hydroxyisobutyrylation is a widely distributed active histone mark.</title>
        <authorList>
            <person name="Dai L."/>
            <person name="Peng C."/>
            <person name="Montellier E."/>
            <person name="Lu Z."/>
            <person name="Chen Y."/>
            <person name="Ishii H."/>
            <person name="Debernardi A."/>
            <person name="Buchou T."/>
            <person name="Rousseaux S."/>
            <person name="Jin F."/>
            <person name="Sabari B.R."/>
            <person name="Deng Z."/>
            <person name="Allis C.D."/>
            <person name="Ren B."/>
            <person name="Khochbin S."/>
            <person name="Zhao Y."/>
        </authorList>
    </citation>
    <scope>HYDROXYBUTYRYLATION AT LYS-6; LYS-10; LYS-37; LYS-75; LYS-76; LYS-96 AND LYS-119</scope>
</reference>
<reference key="20">
    <citation type="journal article" date="2014" name="Nature">
        <title>Glutamine methylation in histone H2A is an RNA-polymerase-I-dedicated modification.</title>
        <authorList>
            <person name="Tessarz P."/>
            <person name="Santos-Rosa H."/>
            <person name="Robson S.C."/>
            <person name="Sylvestersen K.B."/>
            <person name="Nelson C.J."/>
            <person name="Nielsen M.L."/>
            <person name="Kouzarides T."/>
        </authorList>
    </citation>
    <scope>METHYLATION AT GLN-105</scope>
</reference>
<reference key="21">
    <citation type="journal article" date="2014" name="Nature">
        <title>TRIM37 is a new histone H2A ubiquitin ligase and breast cancer oncoprotein.</title>
        <authorList>
            <person name="Bhatnagar S."/>
            <person name="Gazin C."/>
            <person name="Chamberlain L."/>
            <person name="Ou J."/>
            <person name="Zhu X."/>
            <person name="Tushir J.S."/>
            <person name="Virbasius C.M."/>
            <person name="Lin L."/>
            <person name="Zhu L.J."/>
            <person name="Wajapeyee N."/>
            <person name="Green M.R."/>
        </authorList>
    </citation>
    <scope>UBIQUITINATION AT LYS-120</scope>
</reference>
<reference key="22">
    <citation type="journal article" date="2016" name="Genes Dev.">
        <title>USP51 deubiquitylates H2AK13,15ub and regulates DNA damage response.</title>
        <authorList>
            <person name="Wang Z."/>
            <person name="Zhang H."/>
            <person name="Liu J."/>
            <person name="Cheruiyot A."/>
            <person name="Lee J.H."/>
            <person name="Ordog T."/>
            <person name="Lou Z."/>
            <person name="You Z."/>
            <person name="Zhang Z."/>
        </authorList>
    </citation>
    <scope>DEUBIQUITINATION AT LYS-14 AND LYS-16 BY USP51</scope>
</reference>
<reference key="23">
    <citation type="journal article" date="2016" name="Mol. Cell">
        <title>Metabolic regulation of gene expression by histone lysine beta-hydroxybutyrylation.</title>
        <authorList>
            <person name="Xie Z."/>
            <person name="Zhang D."/>
            <person name="Chung D."/>
            <person name="Tang Z."/>
            <person name="Huang H."/>
            <person name="Dai L."/>
            <person name="Qi S."/>
            <person name="Li J."/>
            <person name="Colak G."/>
            <person name="Chen Y."/>
            <person name="Xia C."/>
            <person name="Peng C."/>
            <person name="Ruan H."/>
            <person name="Kirkey M."/>
            <person name="Wang D."/>
            <person name="Jensen L.M."/>
            <person name="Kwon O.K."/>
            <person name="Lee S."/>
            <person name="Pletcher S.D."/>
            <person name="Tan M."/>
            <person name="Lombard D.B."/>
            <person name="White K.P."/>
            <person name="Zhao H."/>
            <person name="Li J."/>
            <person name="Roeder R.G."/>
            <person name="Yang X."/>
            <person name="Zhao Y."/>
        </authorList>
    </citation>
    <scope>HYDROXYBUTYRYLATION AT LYS-10; LYS-14; LYS-37; LYS-96 AND LYS-119</scope>
</reference>
<reference key="24">
    <citation type="journal article" date="2019" name="Mol. Cell">
        <title>Glutarylation of histone H4 lysine 91 regulates chromatin dynamics.</title>
        <authorList>
            <person name="Bao X."/>
            <person name="Liu Z."/>
            <person name="Zhang W."/>
            <person name="Gladysz K."/>
            <person name="Fung Y.M.E."/>
            <person name="Tian G."/>
            <person name="Xiong Y."/>
            <person name="Wong J.W.H."/>
            <person name="Yuen K.W.Y."/>
            <person name="Li X.D."/>
        </authorList>
    </citation>
    <scope>GLUTARYLATION AT LYS-96; LYS-100; LYS-119; LYS-120 AND LYS-126</scope>
</reference>
<proteinExistence type="evidence at protein level"/>
<dbReference type="EMBL" id="AY131988">
    <property type="protein sequence ID" value="AAN59969.1"/>
    <property type="molecule type" value="Genomic_DNA"/>
</dbReference>
<dbReference type="EMBL" id="AL021807">
    <property type="status" value="NOT_ANNOTATED_CDS"/>
    <property type="molecule type" value="Genomic_DNA"/>
</dbReference>
<dbReference type="EMBL" id="BC093851">
    <property type="protein sequence ID" value="AAH93851.1"/>
    <property type="molecule type" value="mRNA"/>
</dbReference>
<dbReference type="EMBL" id="BC093849">
    <property type="protein sequence ID" value="AAH93849.1"/>
    <property type="molecule type" value="mRNA"/>
</dbReference>
<dbReference type="CCDS" id="CCDS4622.1"/>
<dbReference type="RefSeq" id="NP_542163.1">
    <property type="nucleotide sequence ID" value="NM_080596.3"/>
</dbReference>
<dbReference type="PDB" id="8OL1">
    <property type="method" value="EM"/>
    <property type="resolution" value="3.50 A"/>
    <property type="chains" value="C=11-118"/>
</dbReference>
<dbReference type="PDBsum" id="8OL1"/>
<dbReference type="EMDB" id="EMD-16936"/>
<dbReference type="SMR" id="Q96KK5"/>
<dbReference type="BioGRID" id="124438">
    <property type="interactions" value="127"/>
</dbReference>
<dbReference type="DIP" id="DIP-61699N"/>
<dbReference type="FunCoup" id="Q96KK5">
    <property type="interactions" value="129"/>
</dbReference>
<dbReference type="IntAct" id="Q96KK5">
    <property type="interactions" value="59"/>
</dbReference>
<dbReference type="MINT" id="Q96KK5"/>
<dbReference type="iPTMnet" id="Q96KK5"/>
<dbReference type="PhosphoSitePlus" id="Q96KK5"/>
<dbReference type="SwissPalm" id="Q96KK5"/>
<dbReference type="BioMuta" id="HIST1H2AH"/>
<dbReference type="DMDM" id="74751984"/>
<dbReference type="jPOST" id="Q96KK5"/>
<dbReference type="MassIVE" id="Q96KK5"/>
<dbReference type="PeptideAtlas" id="Q96KK5"/>
<dbReference type="PRIDE" id="Q96KK5"/>
<dbReference type="Pumba" id="Q96KK5"/>
<dbReference type="TopDownProteomics" id="Q96KK5"/>
<dbReference type="Antibodypedia" id="72981">
    <property type="antibodies" value="116 antibodies from 16 providers"/>
</dbReference>
<dbReference type="DNASU" id="85235"/>
<dbReference type="Ensembl" id="ENST00000377459.3">
    <property type="protein sequence ID" value="ENSP00000366679.2"/>
    <property type="gene ID" value="ENSG00000274997.2"/>
</dbReference>
<dbReference type="GeneID" id="85235"/>
<dbReference type="KEGG" id="hsa:85235"/>
<dbReference type="MANE-Select" id="ENST00000377459.3">
    <property type="protein sequence ID" value="ENSP00000366679.2"/>
    <property type="RefSeq nucleotide sequence ID" value="NM_080596.3"/>
    <property type="RefSeq protein sequence ID" value="NP_542163.1"/>
</dbReference>
<dbReference type="UCSC" id="uc003niz.5">
    <property type="organism name" value="human"/>
</dbReference>
<dbReference type="AGR" id="HGNC:13671"/>
<dbReference type="CTD" id="85235"/>
<dbReference type="GeneCards" id="H2AC12"/>
<dbReference type="HGNC" id="HGNC:13671">
    <property type="gene designation" value="H2AC12"/>
</dbReference>
<dbReference type="HPA" id="ENSG00000274997">
    <property type="expression patterns" value="Tissue enriched (bone)"/>
</dbReference>
<dbReference type="MIM" id="615013">
    <property type="type" value="gene"/>
</dbReference>
<dbReference type="neXtProt" id="NX_Q96KK5"/>
<dbReference type="OpenTargets" id="ENSG00000274997"/>
<dbReference type="VEuPathDB" id="HostDB:ENSG00000274997"/>
<dbReference type="eggNOG" id="KOG1756">
    <property type="taxonomic scope" value="Eukaryota"/>
</dbReference>
<dbReference type="GeneTree" id="ENSGT00940000153125"/>
<dbReference type="HOGENOM" id="CLU_062828_3_3_1"/>
<dbReference type="InParanoid" id="Q96KK5"/>
<dbReference type="OMA" id="ANEMFIN"/>
<dbReference type="OrthoDB" id="9829024at2759"/>
<dbReference type="PAN-GO" id="Q96KK5">
    <property type="GO annotations" value="1 GO annotation based on evolutionary models"/>
</dbReference>
<dbReference type="PhylomeDB" id="Q96KK5"/>
<dbReference type="TreeFam" id="TF300137"/>
<dbReference type="PathwayCommons" id="Q96KK5"/>
<dbReference type="Reactome" id="R-HSA-3214815">
    <property type="pathway name" value="HDACs deacetylate histones"/>
</dbReference>
<dbReference type="Reactome" id="R-HSA-3214847">
    <property type="pathway name" value="HATs acetylate histones"/>
</dbReference>
<dbReference type="Reactome" id="R-HSA-3214858">
    <property type="pathway name" value="RMTs methylate histone arginines"/>
</dbReference>
<dbReference type="Reactome" id="R-HSA-5689603">
    <property type="pathway name" value="UCH proteinases"/>
</dbReference>
<dbReference type="Reactome" id="R-HSA-5689880">
    <property type="pathway name" value="Ub-specific processing proteases"/>
</dbReference>
<dbReference type="Reactome" id="R-HSA-5689901">
    <property type="pathway name" value="Metalloprotease DUBs"/>
</dbReference>
<dbReference type="Reactome" id="R-HSA-9609690">
    <property type="pathway name" value="HCMV Early Events"/>
</dbReference>
<dbReference type="Reactome" id="R-HSA-9610379">
    <property type="pathway name" value="HCMV Late Events"/>
</dbReference>
<dbReference type="SignaLink" id="Q96KK5"/>
<dbReference type="SIGNOR" id="Q96KK5"/>
<dbReference type="BioGRID-ORCS" id="85235">
    <property type="hits" value="450 hits in 1078 CRISPR screens"/>
</dbReference>
<dbReference type="ChiTaRS" id="HIST1H2AH">
    <property type="organism name" value="human"/>
</dbReference>
<dbReference type="GeneWiki" id="HIST1H2AH"/>
<dbReference type="GenomeRNAi" id="85235"/>
<dbReference type="Pharos" id="Q96KK5">
    <property type="development level" value="Tbio"/>
</dbReference>
<dbReference type="PRO" id="PR:Q96KK5"/>
<dbReference type="Proteomes" id="UP000005640">
    <property type="component" value="Chromosome 6"/>
</dbReference>
<dbReference type="RNAct" id="Q96KK5">
    <property type="molecule type" value="protein"/>
</dbReference>
<dbReference type="Bgee" id="ENSG00000274997">
    <property type="expression patterns" value="Expressed in bone marrow cell and 91 other cell types or tissues"/>
</dbReference>
<dbReference type="ExpressionAtlas" id="Q96KK5">
    <property type="expression patterns" value="baseline and differential"/>
</dbReference>
<dbReference type="GO" id="GO:0070062">
    <property type="term" value="C:extracellular exosome"/>
    <property type="evidence" value="ECO:0007005"/>
    <property type="project" value="UniProtKB"/>
</dbReference>
<dbReference type="GO" id="GO:0000786">
    <property type="term" value="C:nucleosome"/>
    <property type="evidence" value="ECO:0000318"/>
    <property type="project" value="GO_Central"/>
</dbReference>
<dbReference type="GO" id="GO:0005634">
    <property type="term" value="C:nucleus"/>
    <property type="evidence" value="ECO:0000318"/>
    <property type="project" value="GO_Central"/>
</dbReference>
<dbReference type="GO" id="GO:0003677">
    <property type="term" value="F:DNA binding"/>
    <property type="evidence" value="ECO:0007669"/>
    <property type="project" value="UniProtKB-KW"/>
</dbReference>
<dbReference type="GO" id="GO:0046982">
    <property type="term" value="F:protein heterodimerization activity"/>
    <property type="evidence" value="ECO:0007669"/>
    <property type="project" value="InterPro"/>
</dbReference>
<dbReference type="GO" id="GO:0030527">
    <property type="term" value="F:structural constituent of chromatin"/>
    <property type="evidence" value="ECO:0000318"/>
    <property type="project" value="GO_Central"/>
</dbReference>
<dbReference type="GO" id="GO:0031507">
    <property type="term" value="P:heterochromatin formation"/>
    <property type="evidence" value="ECO:0000318"/>
    <property type="project" value="GO_Central"/>
</dbReference>
<dbReference type="CDD" id="cd00074">
    <property type="entry name" value="HFD_H2A"/>
    <property type="match status" value="1"/>
</dbReference>
<dbReference type="FunFam" id="1.10.20.10:FF:000103">
    <property type="entry name" value="Histone H2A type 1"/>
    <property type="match status" value="1"/>
</dbReference>
<dbReference type="Gene3D" id="1.10.20.10">
    <property type="entry name" value="Histone, subunit A"/>
    <property type="match status" value="1"/>
</dbReference>
<dbReference type="InterPro" id="IPR009072">
    <property type="entry name" value="Histone-fold"/>
</dbReference>
<dbReference type="InterPro" id="IPR002119">
    <property type="entry name" value="Histone_H2A"/>
</dbReference>
<dbReference type="InterPro" id="IPR007125">
    <property type="entry name" value="Histone_H2A/H2B/H3"/>
</dbReference>
<dbReference type="InterPro" id="IPR032454">
    <property type="entry name" value="Histone_H2A_C"/>
</dbReference>
<dbReference type="InterPro" id="IPR032458">
    <property type="entry name" value="Histone_H2A_CS"/>
</dbReference>
<dbReference type="PANTHER" id="PTHR23430">
    <property type="entry name" value="HISTONE H2A"/>
    <property type="match status" value="1"/>
</dbReference>
<dbReference type="Pfam" id="PF00125">
    <property type="entry name" value="Histone"/>
    <property type="match status" value="1"/>
</dbReference>
<dbReference type="Pfam" id="PF16211">
    <property type="entry name" value="Histone_H2A_C"/>
    <property type="match status" value="1"/>
</dbReference>
<dbReference type="PRINTS" id="PR00620">
    <property type="entry name" value="HISTONEH2A"/>
</dbReference>
<dbReference type="SMART" id="SM00414">
    <property type="entry name" value="H2A"/>
    <property type="match status" value="1"/>
</dbReference>
<dbReference type="SUPFAM" id="SSF47113">
    <property type="entry name" value="Histone-fold"/>
    <property type="match status" value="1"/>
</dbReference>
<dbReference type="PROSITE" id="PS00046">
    <property type="entry name" value="HISTONE_H2A"/>
    <property type="match status" value="1"/>
</dbReference>
<name>H2A1H_HUMAN</name>
<feature type="initiator methionine" description="Removed" evidence="8">
    <location>
        <position position="1"/>
    </location>
</feature>
<feature type="chain" id="PRO_0000230200" description="Histone H2A type 1-H">
    <location>
        <begin position="2"/>
        <end position="128"/>
    </location>
</feature>
<feature type="region of interest" description="Disordered" evidence="4">
    <location>
        <begin position="1"/>
        <end position="22"/>
    </location>
</feature>
<feature type="compositionally biased region" description="Basic residues" evidence="4">
    <location>
        <begin position="7"/>
        <end position="19"/>
    </location>
</feature>
<feature type="modified residue" description="N-acetylserine" evidence="8">
    <location>
        <position position="2"/>
    </location>
</feature>
<feature type="modified residue" description="Phosphoserine; by RPS6KA5" evidence="5">
    <location>
        <position position="2"/>
    </location>
</feature>
<feature type="modified residue" description="Citrulline; alternate" evidence="8">
    <location>
        <position position="4"/>
    </location>
</feature>
<feature type="modified residue" description="Symmetric dimethylarginine; by PRMT5; alternate" evidence="3">
    <location>
        <position position="4"/>
    </location>
</feature>
<feature type="modified residue" description="N6-(2-hydroxyisobutyryl)lysine" evidence="21">
    <location>
        <position position="6"/>
    </location>
</feature>
<feature type="modified residue" description="N6-(2-hydroxyisobutyryl)lysine; alternate" evidence="21">
    <location>
        <position position="10"/>
    </location>
</feature>
<feature type="modified residue" description="N6-(beta-hydroxybutyryl)lysine; alternate" evidence="24">
    <location>
        <position position="10"/>
    </location>
</feature>
<feature type="modified residue" description="N6-lactoyllysine; alternate" evidence="1">
    <location>
        <position position="10"/>
    </location>
</feature>
<feature type="modified residue" description="N6-succinyllysine; alternate" evidence="16">
    <location>
        <position position="10"/>
    </location>
</feature>
<feature type="modified residue" description="N6-(beta-hydroxybutyryl)lysine; alternate" evidence="24">
    <location>
        <position position="14"/>
    </location>
</feature>
<feature type="modified residue" description="N6-(2-hydroxyisobutyryl)lysine; alternate" evidence="21">
    <location>
        <position position="37"/>
    </location>
</feature>
<feature type="modified residue" description="N6-(beta-hydroxybutyryl)lysine; alternate" evidence="24">
    <location>
        <position position="37"/>
    </location>
</feature>
<feature type="modified residue" description="N6-crotonyllysine; alternate" evidence="15">
    <location>
        <position position="37"/>
    </location>
</feature>
<feature type="modified residue" description="N6-(2-hydroxyisobutyryl)lysine" evidence="21">
    <location>
        <position position="75"/>
    </location>
</feature>
<feature type="modified residue" description="N6-(2-hydroxyisobutyryl)lysine" evidence="21">
    <location>
        <position position="76"/>
    </location>
</feature>
<feature type="modified residue" description="N6-(2-hydroxyisobutyryl)lysine; alternate" evidence="21">
    <location>
        <position position="96"/>
    </location>
</feature>
<feature type="modified residue" description="N6-(beta-hydroxybutyryl)lysine; alternate" evidence="24">
    <location>
        <position position="96"/>
    </location>
</feature>
<feature type="modified residue" description="N6-glutaryllysine; alternate" evidence="25">
    <location>
        <position position="96"/>
    </location>
</feature>
<feature type="modified residue" description="N6-succinyllysine; alternate" evidence="16">
    <location>
        <position position="96"/>
    </location>
</feature>
<feature type="modified residue" description="N6-glutaryllysine" evidence="25">
    <location>
        <position position="100"/>
    </location>
</feature>
<feature type="modified residue" description="N5-methylglutamine" evidence="20">
    <location>
        <position position="105"/>
    </location>
</feature>
<feature type="modified residue" description="N6-(2-hydroxyisobutyryl)lysine; alternate" evidence="21">
    <location>
        <position position="119"/>
    </location>
</feature>
<feature type="modified residue" description="N6-(beta-hydroxybutyryl)lysine; alternate" evidence="24">
    <location>
        <position position="119"/>
    </location>
</feature>
<feature type="modified residue" description="N6-crotonyllysine; alternate" evidence="15">
    <location>
        <position position="119"/>
    </location>
</feature>
<feature type="modified residue" description="N6-glutaryllysine; alternate" evidence="25">
    <location>
        <position position="119"/>
    </location>
</feature>
<feature type="modified residue" description="N6-crotonyllysine; alternate" evidence="15">
    <location>
        <position position="120"/>
    </location>
</feature>
<feature type="modified residue" description="N6-glutaryllysine; alternate" evidence="25">
    <location>
        <position position="120"/>
    </location>
</feature>
<feature type="modified residue" description="Phosphothreonine; by DCAF1" evidence="6 19">
    <location>
        <position position="121"/>
    </location>
</feature>
<feature type="modified residue" description="N6-crotonyllysine; alternate" evidence="15">
    <location>
        <position position="126"/>
    </location>
</feature>
<feature type="modified residue" description="N6-glutaryllysine; alternate" evidence="25">
    <location>
        <position position="126"/>
    </location>
</feature>
<feature type="cross-link" description="Glycyl lysine isopeptide (Lys-Gly) (interchain with G-Cter in ubiquitin); alternate" evidence="17 18">
    <location>
        <position position="14"/>
    </location>
</feature>
<feature type="cross-link" description="Glycyl lysine isopeptide (Lys-Gly) (interchain with G-Cter in ubiquitin)" evidence="17 18">
    <location>
        <position position="16"/>
    </location>
</feature>
<feature type="cross-link" description="Glycyl lysine isopeptide (Lys-Gly) (interchain with G-Cter in ubiquitin); alternate" evidence="7 9 10 22">
    <location>
        <position position="120"/>
    </location>
</feature>
<feature type="mutagenesis site" description="Blocks the inhibition of transcription by RPS6KA5/MSK1." evidence="5">
    <original>S</original>
    <variation>A</variation>
    <location>
        <position position="2"/>
    </location>
</feature>
<feature type="helix" evidence="28">
    <location>
        <begin position="18"/>
        <end position="22"/>
    </location>
</feature>
<feature type="helix" evidence="28">
    <location>
        <begin position="28"/>
        <end position="37"/>
    </location>
</feature>
<feature type="strand" evidence="28">
    <location>
        <begin position="42"/>
        <end position="44"/>
    </location>
</feature>
<feature type="helix" evidence="28">
    <location>
        <begin position="47"/>
        <end position="54"/>
    </location>
</feature>
<feature type="helix" evidence="28">
    <location>
        <begin position="56"/>
        <end position="65"/>
    </location>
</feature>
<feature type="helix" evidence="28">
    <location>
        <begin position="66"/>
        <end position="69"/>
    </location>
</feature>
<feature type="turn" evidence="28">
    <location>
        <begin position="70"/>
        <end position="75"/>
    </location>
</feature>
<feature type="strand" evidence="28">
    <location>
        <begin position="77"/>
        <end position="79"/>
    </location>
</feature>
<feature type="helix" evidence="28">
    <location>
        <begin position="81"/>
        <end position="89"/>
    </location>
</feature>
<feature type="helix" evidence="28">
    <location>
        <begin position="94"/>
        <end position="97"/>
    </location>
</feature>
<feature type="strand" evidence="28">
    <location>
        <begin position="100"/>
        <end position="103"/>
    </location>
</feature>
<evidence type="ECO:0000250" key="1">
    <source>
        <dbReference type="UniProtKB" id="P0C0S5"/>
    </source>
</evidence>
<evidence type="ECO:0000250" key="2">
    <source>
        <dbReference type="UniProtKB" id="P22752"/>
    </source>
</evidence>
<evidence type="ECO:0000250" key="3">
    <source>
        <dbReference type="UniProtKB" id="Q8CGP6"/>
    </source>
</evidence>
<evidence type="ECO:0000256" key="4">
    <source>
        <dbReference type="SAM" id="MobiDB-lite"/>
    </source>
</evidence>
<evidence type="ECO:0000269" key="5">
    <source>
    </source>
</evidence>
<evidence type="ECO:0000269" key="6">
    <source>
    </source>
</evidence>
<evidence type="ECO:0000269" key="7">
    <source>
    </source>
</evidence>
<evidence type="ECO:0000269" key="8">
    <source>
    </source>
</evidence>
<evidence type="ECO:0000269" key="9">
    <source>
    </source>
</evidence>
<evidence type="ECO:0000269" key="10">
    <source>
    </source>
</evidence>
<evidence type="ECO:0000269" key="11">
    <source>
    </source>
</evidence>
<evidence type="ECO:0000269" key="12">
    <source>
    </source>
</evidence>
<evidence type="ECO:0000269" key="13">
    <source>
    </source>
</evidence>
<evidence type="ECO:0000269" key="14">
    <source>
    </source>
</evidence>
<evidence type="ECO:0000269" key="15">
    <source>
    </source>
</evidence>
<evidence type="ECO:0000269" key="16">
    <source>
    </source>
</evidence>
<evidence type="ECO:0000269" key="17">
    <source>
    </source>
</evidence>
<evidence type="ECO:0000269" key="18">
    <source>
    </source>
</evidence>
<evidence type="ECO:0000269" key="19">
    <source>
    </source>
</evidence>
<evidence type="ECO:0000269" key="20">
    <source>
    </source>
</evidence>
<evidence type="ECO:0000269" key="21">
    <source>
    </source>
</evidence>
<evidence type="ECO:0000269" key="22">
    <source>
    </source>
</evidence>
<evidence type="ECO:0000269" key="23">
    <source>
    </source>
</evidence>
<evidence type="ECO:0000269" key="24">
    <source>
    </source>
</evidence>
<evidence type="ECO:0000269" key="25">
    <source>
    </source>
</evidence>
<evidence type="ECO:0000305" key="26"/>
<evidence type="ECO:0000312" key="27">
    <source>
        <dbReference type="HGNC" id="HGNC:13671"/>
    </source>
</evidence>
<evidence type="ECO:0007829" key="28">
    <source>
        <dbReference type="PDB" id="8OL1"/>
    </source>
</evidence>
<sequence>MSGRGKQGGKARAKAKTRSSRAGLQFPVGRVHRLLRKGNYAERVGAGAPVYLAAVLEYLTAEILELAGNAARDNKKTRIIPRHLQLAIRNDEELNKLLGKVTIAQGGVLPNIQAVLLPKKTESHHKAK</sequence>